<protein>
    <recommendedName>
        <fullName>Thiopurine S-methyltransferase</fullName>
        <ecNumber>2.1.1.67</ecNumber>
    </recommendedName>
    <alternativeName>
        <fullName>Thiopurine methyltransferase</fullName>
    </alternativeName>
</protein>
<keyword id="KW-0007">Acetylation</keyword>
<keyword id="KW-0963">Cytoplasm</keyword>
<keyword id="KW-0489">Methyltransferase</keyword>
<keyword id="KW-1185">Reference proteome</keyword>
<keyword id="KW-0949">S-adenosyl-L-methionine</keyword>
<keyword id="KW-0808">Transferase</keyword>
<gene>
    <name type="primary">TPMT</name>
</gene>
<evidence type="ECO:0000250" key="1"/>
<evidence type="ECO:0000250" key="2">
    <source>
        <dbReference type="UniProtKB" id="P51580"/>
    </source>
</evidence>
<evidence type="ECO:0000305" key="3"/>
<reference key="1">
    <citation type="journal article" date="2005" name="Pharmacogenet. Genomics">
        <title>Thiopurine S-methyltransferase pharmacogenetics: variant allele functional and comparative genomics.</title>
        <authorList>
            <person name="Salavaggione O.E."/>
            <person name="Wang L."/>
            <person name="Wiepert M."/>
            <person name="Yee V.C."/>
            <person name="Weinshilboum R.M."/>
        </authorList>
    </citation>
    <scope>NUCLEOTIDE SEQUENCE [MRNA]</scope>
</reference>
<comment type="catalytic activity">
    <reaction evidence="2">
        <text>S-adenosyl-L-methionine + a thiopurine = S-adenosyl-L-homocysteine + a thiopurine S-methylether.</text>
        <dbReference type="EC" id="2.1.1.67"/>
    </reaction>
</comment>
<comment type="subunit">
    <text evidence="2">Monomer.</text>
</comment>
<comment type="subcellular location">
    <subcellularLocation>
        <location>Cytoplasm</location>
    </subcellularLocation>
</comment>
<comment type="similarity">
    <text evidence="3">Belongs to the class I-like SAM-binding methyltransferase superfamily. TPMT family.</text>
</comment>
<feature type="chain" id="PRO_0000220107" description="Thiopurine S-methyltransferase">
    <location>
        <begin position="1"/>
        <end position="245"/>
    </location>
</feature>
<feature type="binding site" evidence="1">
    <location>
        <begin position="29"/>
        <end position="40"/>
    </location>
    <ligand>
        <name>S-adenosyl-L-methionine</name>
        <dbReference type="ChEBI" id="CHEBI:59789"/>
    </ligand>
</feature>
<feature type="binding site" evidence="1">
    <location>
        <position position="40"/>
    </location>
    <ligand>
        <name>substrate</name>
    </ligand>
</feature>
<feature type="binding site" evidence="1">
    <location>
        <position position="69"/>
    </location>
    <ligand>
        <name>S-adenosyl-L-methionine</name>
        <dbReference type="ChEBI" id="CHEBI:59789"/>
    </ligand>
</feature>
<feature type="binding site" evidence="1">
    <location>
        <position position="90"/>
    </location>
    <ligand>
        <name>S-adenosyl-L-methionine</name>
        <dbReference type="ChEBI" id="CHEBI:59789"/>
    </ligand>
</feature>
<feature type="binding site" evidence="1">
    <location>
        <position position="152"/>
    </location>
    <ligand>
        <name>S-adenosyl-L-methionine</name>
        <dbReference type="ChEBI" id="CHEBI:59789"/>
    </ligand>
</feature>
<feature type="modified residue" description="N6-acetyllysine" evidence="2">
    <location>
        <position position="58"/>
    </location>
</feature>
<dbReference type="EC" id="2.1.1.67"/>
<dbReference type="EMBL" id="AY827082">
    <property type="protein sequence ID" value="AAX37646.1"/>
    <property type="molecule type" value="mRNA"/>
</dbReference>
<dbReference type="RefSeq" id="XP_042793746.1">
    <property type="nucleotide sequence ID" value="XM_042937812.1"/>
</dbReference>
<dbReference type="SMR" id="Q3BCR0"/>
<dbReference type="Ensembl" id="ENSPLOT00000033949.1">
    <property type="protein sequence ID" value="ENSPLOP00000030765.1"/>
    <property type="gene ID" value="ENSPLOG00000022469.1"/>
</dbReference>
<dbReference type="GeneID" id="122219529"/>
<dbReference type="GeneTree" id="ENSGT00390000016823"/>
<dbReference type="OMA" id="LWCGDFF"/>
<dbReference type="Proteomes" id="UP000694399">
    <property type="component" value="Unassembled WGS sequence"/>
</dbReference>
<dbReference type="GO" id="GO:0005737">
    <property type="term" value="C:cytoplasm"/>
    <property type="evidence" value="ECO:0007669"/>
    <property type="project" value="UniProtKB-SubCell"/>
</dbReference>
<dbReference type="GO" id="GO:1904047">
    <property type="term" value="F:S-adenosyl-L-methionine binding"/>
    <property type="evidence" value="ECO:0007669"/>
    <property type="project" value="Ensembl"/>
</dbReference>
<dbReference type="GO" id="GO:0008119">
    <property type="term" value="F:thiopurine S-methyltransferase activity"/>
    <property type="evidence" value="ECO:0007669"/>
    <property type="project" value="UniProtKB-EC"/>
</dbReference>
<dbReference type="GO" id="GO:0032259">
    <property type="term" value="P:methylation"/>
    <property type="evidence" value="ECO:0007669"/>
    <property type="project" value="UniProtKB-KW"/>
</dbReference>
<dbReference type="GO" id="GO:0006805">
    <property type="term" value="P:xenobiotic metabolic process"/>
    <property type="evidence" value="ECO:0007669"/>
    <property type="project" value="Ensembl"/>
</dbReference>
<dbReference type="FunFam" id="3.40.50.150:FF:000101">
    <property type="entry name" value="Thiopurine S-methyltransferase"/>
    <property type="match status" value="1"/>
</dbReference>
<dbReference type="Gene3D" id="3.40.50.150">
    <property type="entry name" value="Vaccinia Virus protein VP39"/>
    <property type="match status" value="1"/>
</dbReference>
<dbReference type="HAMAP" id="MF_00812">
    <property type="entry name" value="Thiopur_methtran"/>
    <property type="match status" value="1"/>
</dbReference>
<dbReference type="InterPro" id="IPR029063">
    <property type="entry name" value="SAM-dependent_MTases_sf"/>
</dbReference>
<dbReference type="InterPro" id="IPR025835">
    <property type="entry name" value="Thiopurine_S-MeTrfase"/>
</dbReference>
<dbReference type="InterPro" id="IPR008854">
    <property type="entry name" value="TPMT"/>
</dbReference>
<dbReference type="PANTHER" id="PTHR10259">
    <property type="entry name" value="THIOPURINE S-METHYLTRANSFERASE"/>
    <property type="match status" value="1"/>
</dbReference>
<dbReference type="PANTHER" id="PTHR10259:SF11">
    <property type="entry name" value="THIOPURINE S-METHYLTRANSFERASE"/>
    <property type="match status" value="1"/>
</dbReference>
<dbReference type="Pfam" id="PF05724">
    <property type="entry name" value="TPMT"/>
    <property type="match status" value="1"/>
</dbReference>
<dbReference type="PIRSF" id="PIRSF023956">
    <property type="entry name" value="Thiopurine_S-methyltransferase"/>
    <property type="match status" value="1"/>
</dbReference>
<dbReference type="SUPFAM" id="SSF53335">
    <property type="entry name" value="S-adenosyl-L-methionine-dependent methyltransferases"/>
    <property type="match status" value="1"/>
</dbReference>
<dbReference type="PROSITE" id="PS51585">
    <property type="entry name" value="SAM_MT_TPMT"/>
    <property type="match status" value="1"/>
</dbReference>
<accession>Q3BCR0</accession>
<sequence length="245" mass="28302">MDDASTLIDVKEYPDTEVQKNRVLTLEEWREKWVDGKIGFHQEQGHQLLKKHLDTFLKGKNVLRVFFPLCGKAVEMKWFADRGHCVVGVEISELGIREFFTEQNLSYSEEPIMEIPGAKVFKSSSGNISLYCCNLFDLPRVNIGKFDRIWDRGALVAVNPGDRKCYTDIMLSLTRKGFRYLLAVLSYDPTKHPGPPFYVPDAEIKNLFGSTCNIHCLEKVDVFEERHKSWGIDYIVEKLYLLTEK</sequence>
<proteinExistence type="evidence at transcript level"/>
<name>TPMT_PANLE</name>
<organism>
    <name type="scientific">Panthera leo</name>
    <name type="common">Lion</name>
    <dbReference type="NCBI Taxonomy" id="9689"/>
    <lineage>
        <taxon>Eukaryota</taxon>
        <taxon>Metazoa</taxon>
        <taxon>Chordata</taxon>
        <taxon>Craniata</taxon>
        <taxon>Vertebrata</taxon>
        <taxon>Euteleostomi</taxon>
        <taxon>Mammalia</taxon>
        <taxon>Eutheria</taxon>
        <taxon>Laurasiatheria</taxon>
        <taxon>Carnivora</taxon>
        <taxon>Feliformia</taxon>
        <taxon>Felidae</taxon>
        <taxon>Pantherinae</taxon>
        <taxon>Panthera</taxon>
    </lineage>
</organism>